<proteinExistence type="inferred from homology"/>
<name>YQGF_PSESM</name>
<keyword id="KW-0963">Cytoplasm</keyword>
<keyword id="KW-0378">Hydrolase</keyword>
<keyword id="KW-0540">Nuclease</keyword>
<keyword id="KW-1185">Reference proteome</keyword>
<keyword id="KW-0690">Ribosome biogenesis</keyword>
<protein>
    <recommendedName>
        <fullName evidence="1">Putative pre-16S rRNA nuclease</fullName>
        <ecNumber evidence="1">3.1.-.-</ecNumber>
    </recommendedName>
</protein>
<dbReference type="EC" id="3.1.-.-" evidence="1"/>
<dbReference type="EMBL" id="AE016853">
    <property type="protein sequence ID" value="AAO58466.1"/>
    <property type="molecule type" value="Genomic_DNA"/>
</dbReference>
<dbReference type="RefSeq" id="NP_794771.1">
    <property type="nucleotide sequence ID" value="NC_004578.1"/>
</dbReference>
<dbReference type="SMR" id="Q87VA1"/>
<dbReference type="STRING" id="223283.PSPTO_5038"/>
<dbReference type="KEGG" id="pst:PSPTO_5038"/>
<dbReference type="PATRIC" id="fig|223283.9.peg.5157"/>
<dbReference type="eggNOG" id="COG0816">
    <property type="taxonomic scope" value="Bacteria"/>
</dbReference>
<dbReference type="HOGENOM" id="CLU_098240_3_0_6"/>
<dbReference type="OrthoDB" id="9796140at2"/>
<dbReference type="PhylomeDB" id="Q87VA1"/>
<dbReference type="Proteomes" id="UP000002515">
    <property type="component" value="Chromosome"/>
</dbReference>
<dbReference type="GO" id="GO:0005829">
    <property type="term" value="C:cytosol"/>
    <property type="evidence" value="ECO:0007669"/>
    <property type="project" value="TreeGrafter"/>
</dbReference>
<dbReference type="GO" id="GO:0004518">
    <property type="term" value="F:nuclease activity"/>
    <property type="evidence" value="ECO:0007669"/>
    <property type="project" value="UniProtKB-KW"/>
</dbReference>
<dbReference type="GO" id="GO:0000967">
    <property type="term" value="P:rRNA 5'-end processing"/>
    <property type="evidence" value="ECO:0007669"/>
    <property type="project" value="UniProtKB-UniRule"/>
</dbReference>
<dbReference type="CDD" id="cd16964">
    <property type="entry name" value="YqgF"/>
    <property type="match status" value="1"/>
</dbReference>
<dbReference type="Gene3D" id="3.30.420.140">
    <property type="entry name" value="YqgF/RNase H-like domain"/>
    <property type="match status" value="1"/>
</dbReference>
<dbReference type="HAMAP" id="MF_00651">
    <property type="entry name" value="Nuclease_YqgF"/>
    <property type="match status" value="1"/>
</dbReference>
<dbReference type="InterPro" id="IPR012337">
    <property type="entry name" value="RNaseH-like_sf"/>
</dbReference>
<dbReference type="InterPro" id="IPR005227">
    <property type="entry name" value="YqgF"/>
</dbReference>
<dbReference type="InterPro" id="IPR006641">
    <property type="entry name" value="YqgF/RNaseH-like_dom"/>
</dbReference>
<dbReference type="InterPro" id="IPR037027">
    <property type="entry name" value="YqgF/RNaseH-like_dom_sf"/>
</dbReference>
<dbReference type="NCBIfam" id="TIGR00250">
    <property type="entry name" value="RNAse_H_YqgF"/>
    <property type="match status" value="1"/>
</dbReference>
<dbReference type="PANTHER" id="PTHR33317">
    <property type="entry name" value="POLYNUCLEOTIDYL TRANSFERASE, RIBONUCLEASE H-LIKE SUPERFAMILY PROTEIN"/>
    <property type="match status" value="1"/>
</dbReference>
<dbReference type="PANTHER" id="PTHR33317:SF4">
    <property type="entry name" value="POLYNUCLEOTIDYL TRANSFERASE, RIBONUCLEASE H-LIKE SUPERFAMILY PROTEIN"/>
    <property type="match status" value="1"/>
</dbReference>
<dbReference type="Pfam" id="PF03652">
    <property type="entry name" value="RuvX"/>
    <property type="match status" value="1"/>
</dbReference>
<dbReference type="SMART" id="SM00732">
    <property type="entry name" value="YqgFc"/>
    <property type="match status" value="1"/>
</dbReference>
<dbReference type="SUPFAM" id="SSF53098">
    <property type="entry name" value="Ribonuclease H-like"/>
    <property type="match status" value="1"/>
</dbReference>
<sequence>MAALRLLLGIDYGTKQIGVAVGQAITGQARELCTLKAQNGVPDWDKVQALINEWKPDAIVVGLPLNMDGTPSEMSARAEKFSRKLNGRFGVTVYTHDERLTTFEAKGERMARGGQKGSYRDNPVDAIAAALLLQGWLDEHPELLNV</sequence>
<reference key="1">
    <citation type="journal article" date="2003" name="Proc. Natl. Acad. Sci. U.S.A.">
        <title>The complete genome sequence of the Arabidopsis and tomato pathogen Pseudomonas syringae pv. tomato DC3000.</title>
        <authorList>
            <person name="Buell C.R."/>
            <person name="Joardar V."/>
            <person name="Lindeberg M."/>
            <person name="Selengut J."/>
            <person name="Paulsen I.T."/>
            <person name="Gwinn M.L."/>
            <person name="Dodson R.J."/>
            <person name="DeBoy R.T."/>
            <person name="Durkin A.S."/>
            <person name="Kolonay J.F."/>
            <person name="Madupu R."/>
            <person name="Daugherty S.C."/>
            <person name="Brinkac L.M."/>
            <person name="Beanan M.J."/>
            <person name="Haft D.H."/>
            <person name="Nelson W.C."/>
            <person name="Davidsen T.M."/>
            <person name="Zafar N."/>
            <person name="Zhou L."/>
            <person name="Liu J."/>
            <person name="Yuan Q."/>
            <person name="Khouri H.M."/>
            <person name="Fedorova N.B."/>
            <person name="Tran B."/>
            <person name="Russell D."/>
            <person name="Berry K.J."/>
            <person name="Utterback T.R."/>
            <person name="Van Aken S.E."/>
            <person name="Feldblyum T.V."/>
            <person name="D'Ascenzo M."/>
            <person name="Deng W.-L."/>
            <person name="Ramos A.R."/>
            <person name="Alfano J.R."/>
            <person name="Cartinhour S."/>
            <person name="Chatterjee A.K."/>
            <person name="Delaney T.P."/>
            <person name="Lazarowitz S.G."/>
            <person name="Martin G.B."/>
            <person name="Schneider D.J."/>
            <person name="Tang X."/>
            <person name="Bender C.L."/>
            <person name="White O."/>
            <person name="Fraser C.M."/>
            <person name="Collmer A."/>
        </authorList>
    </citation>
    <scope>NUCLEOTIDE SEQUENCE [LARGE SCALE GENOMIC DNA]</scope>
    <source>
        <strain>ATCC BAA-871 / DC3000</strain>
    </source>
</reference>
<evidence type="ECO:0000255" key="1">
    <source>
        <dbReference type="HAMAP-Rule" id="MF_00651"/>
    </source>
</evidence>
<comment type="function">
    <text evidence="1">Could be a nuclease involved in processing of the 5'-end of pre-16S rRNA.</text>
</comment>
<comment type="subcellular location">
    <subcellularLocation>
        <location evidence="1">Cytoplasm</location>
    </subcellularLocation>
</comment>
<comment type="similarity">
    <text evidence="1">Belongs to the YqgF nuclease family.</text>
</comment>
<gene>
    <name type="ordered locus">PSPTO_5038</name>
</gene>
<organism>
    <name type="scientific">Pseudomonas syringae pv. tomato (strain ATCC BAA-871 / DC3000)</name>
    <dbReference type="NCBI Taxonomy" id="223283"/>
    <lineage>
        <taxon>Bacteria</taxon>
        <taxon>Pseudomonadati</taxon>
        <taxon>Pseudomonadota</taxon>
        <taxon>Gammaproteobacteria</taxon>
        <taxon>Pseudomonadales</taxon>
        <taxon>Pseudomonadaceae</taxon>
        <taxon>Pseudomonas</taxon>
    </lineage>
</organism>
<feature type="chain" id="PRO_0000172121" description="Putative pre-16S rRNA nuclease">
    <location>
        <begin position="1"/>
        <end position="146"/>
    </location>
</feature>
<accession>Q87VA1</accession>